<dbReference type="EC" id="2.7.10.2"/>
<dbReference type="EMBL" id="V00402">
    <property type="protein sequence ID" value="CAA23696.1"/>
    <property type="molecule type" value="Genomic_DNA"/>
</dbReference>
<dbReference type="EMBL" id="J00908">
    <property type="status" value="NOT_ANNOTATED_CDS"/>
    <property type="molecule type" value="Genomic_DNA"/>
</dbReference>
<dbReference type="EMBL" id="M57290">
    <property type="protein sequence ID" value="AAA49078.1"/>
    <property type="molecule type" value="mRNA"/>
</dbReference>
<dbReference type="EMBL" id="S43604">
    <property type="protein sequence ID" value="AAD13831.1"/>
    <property type="molecule type" value="mRNA"/>
</dbReference>
<dbReference type="EMBL" id="S43616">
    <property type="protein sequence ID" value="AAD13835.1"/>
    <property type="molecule type" value="mRNA"/>
</dbReference>
<dbReference type="EMBL" id="S43587">
    <property type="protein sequence ID" value="AAD13830.1"/>
    <property type="molecule type" value="mRNA"/>
</dbReference>
<dbReference type="EMBL" id="S43609">
    <property type="protein sequence ID" value="AAD13832.1"/>
    <property type="molecule type" value="mRNA"/>
</dbReference>
<dbReference type="EMBL" id="S43614">
    <property type="protein sequence ID" value="AAD13834.1"/>
    <property type="molecule type" value="mRNA"/>
</dbReference>
<dbReference type="EMBL" id="S43579">
    <property type="protein sequence ID" value="AAB19353.2"/>
    <property type="molecule type" value="mRNA"/>
</dbReference>
<dbReference type="PIR" id="A00630">
    <property type="entry name" value="TVCHS"/>
</dbReference>
<dbReference type="RefSeq" id="NP_990788.4">
    <molecule id="P00523-1"/>
    <property type="nucleotide sequence ID" value="NM_205457.4"/>
</dbReference>
<dbReference type="RefSeq" id="XP_015151834.2">
    <molecule id="P00523-1"/>
    <property type="nucleotide sequence ID" value="XM_015296348.4"/>
</dbReference>
<dbReference type="RefSeq" id="XP_046786565.1">
    <molecule id="P00523-1"/>
    <property type="nucleotide sequence ID" value="XM_046930609.1"/>
</dbReference>
<dbReference type="PDB" id="1F1W">
    <property type="method" value="X-ray"/>
    <property type="resolution" value="2.10 A"/>
    <property type="chains" value="A=145-247"/>
</dbReference>
<dbReference type="PDB" id="1F2F">
    <property type="method" value="X-ray"/>
    <property type="resolution" value="1.70 A"/>
    <property type="chains" value="A=145-247"/>
</dbReference>
<dbReference type="PDB" id="1NLO">
    <property type="method" value="NMR"/>
    <property type="chains" value="C=81-140"/>
</dbReference>
<dbReference type="PDB" id="1NLP">
    <property type="method" value="NMR"/>
    <property type="chains" value="C=81-140"/>
</dbReference>
<dbReference type="PDB" id="1P13">
    <property type="method" value="X-ray"/>
    <property type="resolution" value="1.63 A"/>
    <property type="chains" value="A/B=145-246"/>
</dbReference>
<dbReference type="PDB" id="1PRL">
    <property type="method" value="NMR"/>
    <property type="chains" value="C=77-140"/>
</dbReference>
<dbReference type="PDB" id="1PRM">
    <property type="method" value="NMR"/>
    <property type="chains" value="C=77-140"/>
</dbReference>
<dbReference type="PDB" id="1RLP">
    <property type="method" value="NMR"/>
    <property type="chains" value="C=77-140"/>
</dbReference>
<dbReference type="PDB" id="1RLQ">
    <property type="method" value="NMR"/>
    <property type="chains" value="C=77-140"/>
</dbReference>
<dbReference type="PDB" id="1SRL">
    <property type="method" value="NMR"/>
    <property type="chains" value="A=77-140"/>
</dbReference>
<dbReference type="PDB" id="1SRM">
    <property type="method" value="NMR"/>
    <property type="chains" value="A=77-140"/>
</dbReference>
<dbReference type="PDB" id="2HWO">
    <property type="method" value="X-ray"/>
    <property type="resolution" value="2.50 A"/>
    <property type="chains" value="A/B=251-533"/>
</dbReference>
<dbReference type="PDB" id="2HWP">
    <property type="method" value="X-ray"/>
    <property type="resolution" value="2.48 A"/>
    <property type="chains" value="A/B=251-533"/>
</dbReference>
<dbReference type="PDB" id="2OIQ">
    <property type="method" value="X-ray"/>
    <property type="resolution" value="2.07 A"/>
    <property type="chains" value="A/B=251-533"/>
</dbReference>
<dbReference type="PDB" id="2PTK">
    <property type="method" value="X-ray"/>
    <property type="resolution" value="2.35 A"/>
    <property type="chains" value="A=81-533"/>
</dbReference>
<dbReference type="PDB" id="2QI8">
    <property type="method" value="X-ray"/>
    <property type="resolution" value="2.32 A"/>
    <property type="chains" value="A/B=251-533"/>
</dbReference>
<dbReference type="PDB" id="2QLQ">
    <property type="method" value="X-ray"/>
    <property type="resolution" value="2.33 A"/>
    <property type="chains" value="A/B=251-533"/>
</dbReference>
<dbReference type="PDB" id="2QQ7">
    <property type="method" value="X-ray"/>
    <property type="resolution" value="2.38 A"/>
    <property type="chains" value="A/B=251-533"/>
</dbReference>
<dbReference type="PDB" id="3D7T">
    <property type="method" value="X-ray"/>
    <property type="resolution" value="2.90 A"/>
    <property type="chains" value="B=251-533"/>
</dbReference>
<dbReference type="PDB" id="3D7U">
    <property type="method" value="X-ray"/>
    <property type="resolution" value="4.11 A"/>
    <property type="chains" value="B/D=260-523"/>
</dbReference>
<dbReference type="PDB" id="3DQW">
    <property type="method" value="X-ray"/>
    <property type="resolution" value="2.02 A"/>
    <property type="chains" value="A/B/C/D=251-533"/>
</dbReference>
<dbReference type="PDB" id="3DQX">
    <property type="method" value="X-ray"/>
    <property type="resolution" value="2.30 A"/>
    <property type="chains" value="A/B=251-533"/>
</dbReference>
<dbReference type="PDB" id="3EL7">
    <property type="method" value="X-ray"/>
    <property type="resolution" value="2.80 A"/>
    <property type="chains" value="A=251-533"/>
</dbReference>
<dbReference type="PDB" id="3EL8">
    <property type="method" value="X-ray"/>
    <property type="resolution" value="2.30 A"/>
    <property type="chains" value="A/B=251-533"/>
</dbReference>
<dbReference type="PDB" id="3EN4">
    <property type="method" value="X-ray"/>
    <property type="resolution" value="2.55 A"/>
    <property type="chains" value="A/B=251-533"/>
</dbReference>
<dbReference type="PDB" id="3EN5">
    <property type="method" value="X-ray"/>
    <property type="resolution" value="2.66 A"/>
    <property type="chains" value="A/B=251-533"/>
</dbReference>
<dbReference type="PDB" id="3EN6">
    <property type="method" value="X-ray"/>
    <property type="resolution" value="2.39 A"/>
    <property type="chains" value="A/B=251-533"/>
</dbReference>
<dbReference type="PDB" id="3EN7">
    <property type="method" value="X-ray"/>
    <property type="resolution" value="2.81 A"/>
    <property type="chains" value="A/B=251-533"/>
</dbReference>
<dbReference type="PDB" id="3F3T">
    <property type="method" value="X-ray"/>
    <property type="resolution" value="2.50 A"/>
    <property type="chains" value="A/B=251-533"/>
</dbReference>
<dbReference type="PDB" id="3F3U">
    <property type="method" value="X-ray"/>
    <property type="resolution" value="2.50 A"/>
    <property type="chains" value="A/B=251-533"/>
</dbReference>
<dbReference type="PDB" id="3F3V">
    <property type="method" value="X-ray"/>
    <property type="resolution" value="2.60 A"/>
    <property type="chains" value="A/B=251-533"/>
</dbReference>
<dbReference type="PDB" id="3F3W">
    <property type="method" value="X-ray"/>
    <property type="resolution" value="2.60 A"/>
    <property type="chains" value="A/B=251-533"/>
</dbReference>
<dbReference type="PDB" id="3F6X">
    <property type="method" value="X-ray"/>
    <property type="resolution" value="2.35 A"/>
    <property type="chains" value="A/B/C/D=251-533"/>
</dbReference>
<dbReference type="PDB" id="3FJ5">
    <property type="method" value="X-ray"/>
    <property type="resolution" value="1.65 A"/>
    <property type="chains" value="A/B=85-140"/>
</dbReference>
<dbReference type="PDB" id="3G5D">
    <property type="method" value="X-ray"/>
    <property type="resolution" value="2.20 A"/>
    <property type="chains" value="A/B=251-533"/>
</dbReference>
<dbReference type="PDB" id="3G6G">
    <property type="method" value="X-ray"/>
    <property type="resolution" value="2.31 A"/>
    <property type="chains" value="A/B=251-533"/>
</dbReference>
<dbReference type="PDB" id="3G6H">
    <property type="method" value="X-ray"/>
    <property type="resolution" value="2.35 A"/>
    <property type="chains" value="A/B=251-533"/>
</dbReference>
<dbReference type="PDB" id="3GEQ">
    <property type="method" value="X-ray"/>
    <property type="resolution" value="2.20 A"/>
    <property type="chains" value="A/B=251-533"/>
</dbReference>
<dbReference type="PDB" id="3LOK">
    <property type="method" value="X-ray"/>
    <property type="resolution" value="2.48 A"/>
    <property type="chains" value="A/B=251-533"/>
</dbReference>
<dbReference type="PDB" id="3OEZ">
    <property type="method" value="X-ray"/>
    <property type="resolution" value="2.40 A"/>
    <property type="chains" value="A/B=251-533"/>
</dbReference>
<dbReference type="PDB" id="3OF0">
    <property type="method" value="X-ray"/>
    <property type="resolution" value="2.70 A"/>
    <property type="chains" value="A/B=251-533"/>
</dbReference>
<dbReference type="PDB" id="3QLF">
    <property type="method" value="X-ray"/>
    <property type="resolution" value="2.75 A"/>
    <property type="chains" value="A/B=251-533"/>
</dbReference>
<dbReference type="PDB" id="3QLG">
    <property type="method" value="X-ray"/>
    <property type="resolution" value="2.75 A"/>
    <property type="chains" value="A/B=251-533"/>
</dbReference>
<dbReference type="PDB" id="3SVV">
    <property type="method" value="X-ray"/>
    <property type="resolution" value="2.20 A"/>
    <property type="chains" value="A/B=251-533"/>
</dbReference>
<dbReference type="PDB" id="3TZ7">
    <property type="method" value="X-ray"/>
    <property type="resolution" value="3.30 A"/>
    <property type="chains" value="A/B=251-533"/>
</dbReference>
<dbReference type="PDB" id="3TZ8">
    <property type="method" value="X-ray"/>
    <property type="resolution" value="2.70 A"/>
    <property type="chains" value="A/B=251-533"/>
</dbReference>
<dbReference type="PDB" id="3TZ9">
    <property type="method" value="X-ray"/>
    <property type="resolution" value="3.10 A"/>
    <property type="chains" value="A/B=251-533"/>
</dbReference>
<dbReference type="PDB" id="3U4W">
    <property type="method" value="X-ray"/>
    <property type="resolution" value="1.90 A"/>
    <property type="chains" value="A=259-533"/>
</dbReference>
<dbReference type="PDB" id="3U51">
    <property type="method" value="X-ray"/>
    <property type="resolution" value="2.24 A"/>
    <property type="chains" value="A/B=259-533"/>
</dbReference>
<dbReference type="PDB" id="3UQF">
    <property type="method" value="X-ray"/>
    <property type="resolution" value="2.27 A"/>
    <property type="chains" value="A/B=251-533"/>
</dbReference>
<dbReference type="PDB" id="3UQG">
    <property type="method" value="X-ray"/>
    <property type="resolution" value="2.20 A"/>
    <property type="chains" value="A/B=251-533"/>
</dbReference>
<dbReference type="PDB" id="4AGW">
    <property type="method" value="X-ray"/>
    <property type="resolution" value="2.60 A"/>
    <property type="chains" value="A/B=251-533"/>
</dbReference>
<dbReference type="PDB" id="4DGG">
    <property type="method" value="X-ray"/>
    <property type="resolution" value="2.65 A"/>
    <property type="chains" value="A/B=251-533"/>
</dbReference>
<dbReference type="PDB" id="4FIC">
    <property type="method" value="X-ray"/>
    <property type="resolution" value="2.50 A"/>
    <property type="chains" value="A/B=251-533"/>
</dbReference>
<dbReference type="PDB" id="4HVU">
    <property type="method" value="X-ray"/>
    <property type="resolution" value="0.98 A"/>
    <property type="chains" value="A=85-141"/>
</dbReference>
<dbReference type="PDB" id="4HVV">
    <property type="method" value="X-ray"/>
    <property type="resolution" value="1.10 A"/>
    <property type="chains" value="A=85-140"/>
</dbReference>
<dbReference type="PDB" id="4HVW">
    <property type="method" value="X-ray"/>
    <property type="resolution" value="0.98 A"/>
    <property type="chains" value="A=85-141"/>
</dbReference>
<dbReference type="PDB" id="4JZ3">
    <property type="method" value="X-ray"/>
    <property type="resolution" value="1.85 A"/>
    <property type="chains" value="A=85-141"/>
</dbReference>
<dbReference type="PDB" id="4JZ4">
    <property type="method" value="X-ray"/>
    <property type="resolution" value="1.56 A"/>
    <property type="chains" value="A/B=85-141"/>
</dbReference>
<dbReference type="PDB" id="4LE9">
    <property type="method" value="X-ray"/>
    <property type="resolution" value="1.34 A"/>
    <property type="chains" value="A=85-141"/>
</dbReference>
<dbReference type="PDB" id="4LGG">
    <property type="method" value="X-ray"/>
    <property type="resolution" value="2.41 A"/>
    <property type="chains" value="A/B=264-533"/>
</dbReference>
<dbReference type="PDB" id="4LGH">
    <property type="method" value="X-ray"/>
    <property type="resolution" value="2.84 A"/>
    <property type="chains" value="A/B=257-533"/>
</dbReference>
<dbReference type="PDB" id="4MCV">
    <property type="method" value="X-ray"/>
    <property type="resolution" value="2.73 A"/>
    <property type="chains" value="A/B=256-533"/>
</dbReference>
<dbReference type="PDB" id="4O2P">
    <property type="method" value="X-ray"/>
    <property type="resolution" value="2.10 A"/>
    <property type="chains" value="A/B=251-533"/>
</dbReference>
<dbReference type="PDB" id="4OML">
    <property type="method" value="X-ray"/>
    <property type="resolution" value="1.60 A"/>
    <property type="chains" value="A=85-141"/>
</dbReference>
<dbReference type="PDB" id="4OMM">
    <property type="method" value="X-ray"/>
    <property type="resolution" value="1.90 A"/>
    <property type="chains" value="A=85-140"/>
</dbReference>
<dbReference type="PDB" id="4OMN">
    <property type="method" value="X-ray"/>
    <property type="resolution" value="1.50 A"/>
    <property type="chains" value="A=85-140"/>
</dbReference>
<dbReference type="PDB" id="4OMO">
    <property type="method" value="X-ray"/>
    <property type="resolution" value="1.04 A"/>
    <property type="chains" value="A/B=85-141"/>
</dbReference>
<dbReference type="PDB" id="4OMP">
    <property type="method" value="X-ray"/>
    <property type="resolution" value="2.00 A"/>
    <property type="chains" value="A=85-139"/>
</dbReference>
<dbReference type="PDB" id="4OMQ">
    <property type="method" value="X-ray"/>
    <property type="resolution" value="2.00 A"/>
    <property type="chains" value="A=85-140"/>
</dbReference>
<dbReference type="PDB" id="4QT7">
    <property type="method" value="X-ray"/>
    <property type="resolution" value="1.55 A"/>
    <property type="chains" value="A=85-141"/>
</dbReference>
<dbReference type="PDB" id="4RTU">
    <property type="method" value="X-ray"/>
    <property type="resolution" value="2.45 A"/>
    <property type="chains" value="A=85-141"/>
</dbReference>
<dbReference type="PDB" id="4RTV">
    <property type="method" value="X-ray"/>
    <property type="resolution" value="1.37 A"/>
    <property type="chains" value="A=85-141"/>
</dbReference>
<dbReference type="PDB" id="4RTW">
    <property type="method" value="X-ray"/>
    <property type="resolution" value="1.24 A"/>
    <property type="chains" value="A/C=85-141"/>
</dbReference>
<dbReference type="PDB" id="4RTX">
    <property type="method" value="X-ray"/>
    <property type="resolution" value="1.32 A"/>
    <property type="chains" value="A/B/C/D=85-141"/>
</dbReference>
<dbReference type="PDB" id="4RTY">
    <property type="method" value="X-ray"/>
    <property type="resolution" value="1.28 A"/>
    <property type="chains" value="A=85-141"/>
</dbReference>
<dbReference type="PDB" id="4RTZ">
    <property type="method" value="X-ray"/>
    <property type="resolution" value="0.98 A"/>
    <property type="chains" value="A=85-141"/>
</dbReference>
<dbReference type="PDB" id="4U5J">
    <property type="method" value="X-ray"/>
    <property type="resolution" value="2.26 A"/>
    <property type="chains" value="A/B=251-533"/>
</dbReference>
<dbReference type="PDB" id="4YBJ">
    <property type="method" value="X-ray"/>
    <property type="resolution" value="2.61 A"/>
    <property type="chains" value="A/B=251-533"/>
</dbReference>
<dbReference type="PDB" id="4YBK">
    <property type="method" value="X-ray"/>
    <property type="resolution" value="2.50 A"/>
    <property type="chains" value="A=251-533"/>
</dbReference>
<dbReference type="PDB" id="5BMM">
    <property type="method" value="X-ray"/>
    <property type="resolution" value="2.50 A"/>
    <property type="chains" value="A/B=251-533"/>
</dbReference>
<dbReference type="PDB" id="5D10">
    <property type="method" value="X-ray"/>
    <property type="resolution" value="2.70 A"/>
    <property type="chains" value="A/B=251-533"/>
</dbReference>
<dbReference type="PDB" id="5D11">
    <property type="method" value="X-ray"/>
    <property type="resolution" value="2.30 A"/>
    <property type="chains" value="A/B=251-533"/>
</dbReference>
<dbReference type="PDB" id="5D12">
    <property type="method" value="X-ray"/>
    <property type="resolution" value="3.00 A"/>
    <property type="chains" value="A/B=251-533"/>
</dbReference>
<dbReference type="PDB" id="5EC7">
    <property type="method" value="X-ray"/>
    <property type="resolution" value="1.65 A"/>
    <property type="chains" value="A/B/C=85-140"/>
</dbReference>
<dbReference type="PDB" id="5ECA">
    <property type="method" value="X-ray"/>
    <property type="resolution" value="1.16 A"/>
    <property type="chains" value="A=85-141"/>
</dbReference>
<dbReference type="PDB" id="5I11">
    <property type="method" value="X-ray"/>
    <property type="resolution" value="1.95 A"/>
    <property type="chains" value="A=85-141"/>
</dbReference>
<dbReference type="PDB" id="5J5S">
    <property type="method" value="X-ray"/>
    <property type="resolution" value="2.15 A"/>
    <property type="chains" value="A/B=251-533"/>
</dbReference>
<dbReference type="PDB" id="5K9I">
    <property type="method" value="X-ray"/>
    <property type="resolution" value="2.50 A"/>
    <property type="chains" value="A/B=251-533"/>
</dbReference>
<dbReference type="PDB" id="5OAV">
    <property type="method" value="X-ray"/>
    <property type="resolution" value="0.95 A"/>
    <property type="chains" value="A/C=85-141"/>
</dbReference>
<dbReference type="PDB" id="5OB0">
    <property type="method" value="X-ray"/>
    <property type="resolution" value="1.17 A"/>
    <property type="chains" value="A=85-141"/>
</dbReference>
<dbReference type="PDB" id="5OB1">
    <property type="method" value="X-ray"/>
    <property type="resolution" value="1.17 A"/>
    <property type="chains" value="A=85-141"/>
</dbReference>
<dbReference type="PDB" id="5OB2">
    <property type="method" value="X-ray"/>
    <property type="resolution" value="1.80 A"/>
    <property type="chains" value="A/C=85-141"/>
</dbReference>
<dbReference type="PDB" id="5SWH">
    <property type="method" value="X-ray"/>
    <property type="resolution" value="2.50 A"/>
    <property type="chains" value="A/B=252-533"/>
</dbReference>
<dbReference type="PDB" id="5SYS">
    <property type="method" value="X-ray"/>
    <property type="resolution" value="2.80 A"/>
    <property type="chains" value="A/B=251-533"/>
</dbReference>
<dbReference type="PDB" id="5T0P">
    <property type="method" value="X-ray"/>
    <property type="resolution" value="2.50 A"/>
    <property type="chains" value="A/B=251-533"/>
</dbReference>
<dbReference type="PDB" id="5TEH">
    <property type="method" value="X-ray"/>
    <property type="resolution" value="2.99 A"/>
    <property type="chains" value="A/B=251-533"/>
</dbReference>
<dbReference type="PDB" id="5XP5">
    <property type="method" value="X-ray"/>
    <property type="resolution" value="2.10 A"/>
    <property type="chains" value="A/B=251-533"/>
</dbReference>
<dbReference type="PDB" id="5XP7">
    <property type="method" value="X-ray"/>
    <property type="resolution" value="2.01 A"/>
    <property type="chains" value="A/B=251-533"/>
</dbReference>
<dbReference type="PDB" id="6HVE">
    <property type="method" value="X-ray"/>
    <property type="resolution" value="1.90 A"/>
    <property type="chains" value="A/B=251-533"/>
</dbReference>
<dbReference type="PDB" id="6HVF">
    <property type="method" value="X-ray"/>
    <property type="resolution" value="2.10 A"/>
    <property type="chains" value="A/B=251-533"/>
</dbReference>
<dbReference type="PDB" id="6L8L">
    <property type="method" value="X-ray"/>
    <property type="resolution" value="2.89 A"/>
    <property type="chains" value="A/B/C/D=251-533"/>
</dbReference>
<dbReference type="PDB" id="6WIW">
    <property type="method" value="X-ray"/>
    <property type="resolution" value="2.30 A"/>
    <property type="chains" value="A/B=251-533"/>
</dbReference>
<dbReference type="PDB" id="6XVM">
    <property type="method" value="X-ray"/>
    <property type="resolution" value="0.90 A"/>
    <property type="chains" value="A/B/C/D=82-141"/>
</dbReference>
<dbReference type="PDB" id="6XVN">
    <property type="method" value="X-ray"/>
    <property type="resolution" value="1.70 A"/>
    <property type="chains" value="A/B=82-141"/>
</dbReference>
<dbReference type="PDB" id="6XVO">
    <property type="method" value="X-ray"/>
    <property type="resolution" value="1.70 A"/>
    <property type="chains" value="A=82-141"/>
</dbReference>
<dbReference type="PDB" id="6XX2">
    <property type="method" value="X-ray"/>
    <property type="resolution" value="1.25 A"/>
    <property type="chains" value="A=85-141"/>
</dbReference>
<dbReference type="PDB" id="6XX3">
    <property type="method" value="X-ray"/>
    <property type="resolution" value="1.36 A"/>
    <property type="chains" value="A=85-141"/>
</dbReference>
<dbReference type="PDB" id="6XX4">
    <property type="method" value="X-ray"/>
    <property type="resolution" value="1.05 A"/>
    <property type="chains" value="A=85-141"/>
</dbReference>
<dbReference type="PDB" id="6XX5">
    <property type="method" value="X-ray"/>
    <property type="resolution" value="1.30 A"/>
    <property type="chains" value="A=85-141"/>
</dbReference>
<dbReference type="PDB" id="7A30">
    <property type="method" value="X-ray"/>
    <property type="resolution" value="1.67 A"/>
    <property type="chains" value="A=82-141"/>
</dbReference>
<dbReference type="PDB" id="7A31">
    <property type="method" value="X-ray"/>
    <property type="resolution" value="0.94 A"/>
    <property type="chains" value="A/B=82-141"/>
</dbReference>
<dbReference type="PDB" id="7A32">
    <property type="method" value="X-ray"/>
    <property type="resolution" value="1.15 A"/>
    <property type="chains" value="A/B/C/D=82-141"/>
</dbReference>
<dbReference type="PDB" id="7A33">
    <property type="method" value="X-ray"/>
    <property type="resolution" value="0.96 A"/>
    <property type="chains" value="A/B=82-141"/>
</dbReference>
<dbReference type="PDB" id="7A34">
    <property type="method" value="X-ray"/>
    <property type="resolution" value="1.85 A"/>
    <property type="chains" value="A=82-141"/>
</dbReference>
<dbReference type="PDB" id="7A35">
    <property type="method" value="X-ray"/>
    <property type="resolution" value="1.31 A"/>
    <property type="chains" value="A/B=82-141"/>
</dbReference>
<dbReference type="PDB" id="7A36">
    <property type="method" value="X-ray"/>
    <property type="resolution" value="1.50 A"/>
    <property type="chains" value="A/B=82-141"/>
</dbReference>
<dbReference type="PDB" id="7A37">
    <property type="method" value="X-ray"/>
    <property type="resolution" value="1.52 A"/>
    <property type="chains" value="A/B=82-141"/>
</dbReference>
<dbReference type="PDB" id="7A38">
    <property type="method" value="X-ray"/>
    <property type="resolution" value="1.62 A"/>
    <property type="chains" value="A/B=82-141"/>
</dbReference>
<dbReference type="PDB" id="7A39">
    <property type="method" value="X-ray"/>
    <property type="resolution" value="1.65 A"/>
    <property type="chains" value="A/B=82-141"/>
</dbReference>
<dbReference type="PDB" id="7A3A">
    <property type="method" value="X-ray"/>
    <property type="resolution" value="1.80 A"/>
    <property type="chains" value="A=82-141"/>
</dbReference>
<dbReference type="PDB" id="7A3B">
    <property type="method" value="X-ray"/>
    <property type="resolution" value="1.91 A"/>
    <property type="chains" value="A=82-141"/>
</dbReference>
<dbReference type="PDB" id="7A3C">
    <property type="method" value="X-ray"/>
    <property type="resolution" value="1.80 A"/>
    <property type="chains" value="A/B/C/D=81-141"/>
</dbReference>
<dbReference type="PDB" id="7A3D">
    <property type="method" value="X-ray"/>
    <property type="resolution" value="2.20 A"/>
    <property type="chains" value="A/B=82-141"/>
</dbReference>
<dbReference type="PDB" id="7A3E">
    <property type="method" value="X-ray"/>
    <property type="resolution" value="1.52 A"/>
    <property type="chains" value="A=81-141"/>
</dbReference>
<dbReference type="PDB" id="7AH3">
    <property type="method" value="X-ray"/>
    <property type="resolution" value="1.95 A"/>
    <property type="chains" value="A/B=251-533"/>
</dbReference>
<dbReference type="PDB" id="7D57">
    <property type="method" value="X-ray"/>
    <property type="resolution" value="2.10 A"/>
    <property type="chains" value="A/B=251-533"/>
</dbReference>
<dbReference type="PDB" id="7D5O">
    <property type="method" value="X-ray"/>
    <property type="resolution" value="2.69 A"/>
    <property type="chains" value="A/B=251-533"/>
</dbReference>
<dbReference type="PDB" id="7NER">
    <property type="method" value="X-ray"/>
    <property type="resolution" value="1.55 A"/>
    <property type="chains" value="A=81-141"/>
</dbReference>
<dbReference type="PDB" id="7NES">
    <property type="method" value="X-ray"/>
    <property type="resolution" value="1.35 A"/>
    <property type="chains" value="A=81-141"/>
</dbReference>
<dbReference type="PDB" id="7NET">
    <property type="method" value="X-ray"/>
    <property type="resolution" value="1.50 A"/>
    <property type="chains" value="A/B=81-141"/>
</dbReference>
<dbReference type="PDB" id="7PVW">
    <property type="method" value="X-ray"/>
    <property type="resolution" value="1.50 A"/>
    <property type="chains" value="A/B=82-141"/>
</dbReference>
<dbReference type="PDB" id="7PVX">
    <property type="method" value="X-ray"/>
    <property type="resolution" value="1.43 A"/>
    <property type="chains" value="A/C=82-141"/>
</dbReference>
<dbReference type="PDB" id="7PVY">
    <property type="method" value="X-ray"/>
    <property type="resolution" value="1.40 A"/>
    <property type="chains" value="A=81-141"/>
</dbReference>
<dbReference type="PDB" id="7PVZ">
    <property type="method" value="X-ray"/>
    <property type="resolution" value="2.00 A"/>
    <property type="chains" value="A/B=81-141"/>
</dbReference>
<dbReference type="PDB" id="7PW0">
    <property type="method" value="X-ray"/>
    <property type="resolution" value="1.70 A"/>
    <property type="chains" value="A/B/C/D/E/F/G/H=82-141"/>
</dbReference>
<dbReference type="PDB" id="7WF5">
    <property type="method" value="X-ray"/>
    <property type="resolution" value="1.80 A"/>
    <property type="chains" value="A/B=251-533"/>
</dbReference>
<dbReference type="PDB" id="8K79">
    <property type="method" value="X-ray"/>
    <property type="resolution" value="2.80 A"/>
    <property type="chains" value="A/B=251-533"/>
</dbReference>
<dbReference type="PDB" id="9BT8">
    <property type="method" value="EM"/>
    <property type="resolution" value="3.34 A"/>
    <property type="chains" value="C=83-533"/>
</dbReference>
<dbReference type="PDB" id="9CX3">
    <property type="method" value="EM"/>
    <property type="resolution" value="3.47 A"/>
    <property type="chains" value="C=83-141"/>
</dbReference>
<dbReference type="PDB" id="9CX9">
    <property type="method" value="EM"/>
    <property type="resolution" value="3.34 A"/>
    <property type="chains" value="B=83-141"/>
</dbReference>
<dbReference type="PDBsum" id="1F1W"/>
<dbReference type="PDBsum" id="1F2F"/>
<dbReference type="PDBsum" id="1NLO"/>
<dbReference type="PDBsum" id="1NLP"/>
<dbReference type="PDBsum" id="1P13"/>
<dbReference type="PDBsum" id="1PRL"/>
<dbReference type="PDBsum" id="1PRM"/>
<dbReference type="PDBsum" id="1RLP"/>
<dbReference type="PDBsum" id="1RLQ"/>
<dbReference type="PDBsum" id="1SRL"/>
<dbReference type="PDBsum" id="1SRM"/>
<dbReference type="PDBsum" id="2HWO"/>
<dbReference type="PDBsum" id="2HWP"/>
<dbReference type="PDBsum" id="2OIQ"/>
<dbReference type="PDBsum" id="2PTK"/>
<dbReference type="PDBsum" id="2QI8"/>
<dbReference type="PDBsum" id="2QLQ"/>
<dbReference type="PDBsum" id="2QQ7"/>
<dbReference type="PDBsum" id="3D7T"/>
<dbReference type="PDBsum" id="3D7U"/>
<dbReference type="PDBsum" id="3DQW"/>
<dbReference type="PDBsum" id="3DQX"/>
<dbReference type="PDBsum" id="3EL7"/>
<dbReference type="PDBsum" id="3EL8"/>
<dbReference type="PDBsum" id="3EN4"/>
<dbReference type="PDBsum" id="3EN5"/>
<dbReference type="PDBsum" id="3EN6"/>
<dbReference type="PDBsum" id="3EN7"/>
<dbReference type="PDBsum" id="3F3T"/>
<dbReference type="PDBsum" id="3F3U"/>
<dbReference type="PDBsum" id="3F3V"/>
<dbReference type="PDBsum" id="3F3W"/>
<dbReference type="PDBsum" id="3F6X"/>
<dbReference type="PDBsum" id="3FJ5"/>
<dbReference type="PDBsum" id="3G5D"/>
<dbReference type="PDBsum" id="3G6G"/>
<dbReference type="PDBsum" id="3G6H"/>
<dbReference type="PDBsum" id="3GEQ"/>
<dbReference type="PDBsum" id="3LOK"/>
<dbReference type="PDBsum" id="3OEZ"/>
<dbReference type="PDBsum" id="3OF0"/>
<dbReference type="PDBsum" id="3QLF"/>
<dbReference type="PDBsum" id="3QLG"/>
<dbReference type="PDBsum" id="3SVV"/>
<dbReference type="PDBsum" id="3TZ7"/>
<dbReference type="PDBsum" id="3TZ8"/>
<dbReference type="PDBsum" id="3TZ9"/>
<dbReference type="PDBsum" id="3U4W"/>
<dbReference type="PDBsum" id="3U51"/>
<dbReference type="PDBsum" id="3UQF"/>
<dbReference type="PDBsum" id="3UQG"/>
<dbReference type="PDBsum" id="4AGW"/>
<dbReference type="PDBsum" id="4DGG"/>
<dbReference type="PDBsum" id="4FIC"/>
<dbReference type="PDBsum" id="4HVU"/>
<dbReference type="PDBsum" id="4HVV"/>
<dbReference type="PDBsum" id="4HVW"/>
<dbReference type="PDBsum" id="4JZ3"/>
<dbReference type="PDBsum" id="4JZ4"/>
<dbReference type="PDBsum" id="4LE9"/>
<dbReference type="PDBsum" id="4LGG"/>
<dbReference type="PDBsum" id="4LGH"/>
<dbReference type="PDBsum" id="4MCV"/>
<dbReference type="PDBsum" id="4O2P"/>
<dbReference type="PDBsum" id="4OML"/>
<dbReference type="PDBsum" id="4OMM"/>
<dbReference type="PDBsum" id="4OMN"/>
<dbReference type="PDBsum" id="4OMO"/>
<dbReference type="PDBsum" id="4OMP"/>
<dbReference type="PDBsum" id="4OMQ"/>
<dbReference type="PDBsum" id="4QT7"/>
<dbReference type="PDBsum" id="4RTU"/>
<dbReference type="PDBsum" id="4RTV"/>
<dbReference type="PDBsum" id="4RTW"/>
<dbReference type="PDBsum" id="4RTX"/>
<dbReference type="PDBsum" id="4RTY"/>
<dbReference type="PDBsum" id="4RTZ"/>
<dbReference type="PDBsum" id="4U5J"/>
<dbReference type="PDBsum" id="4YBJ"/>
<dbReference type="PDBsum" id="4YBK"/>
<dbReference type="PDBsum" id="5BMM"/>
<dbReference type="PDBsum" id="5D10"/>
<dbReference type="PDBsum" id="5D11"/>
<dbReference type="PDBsum" id="5D12"/>
<dbReference type="PDBsum" id="5EC7"/>
<dbReference type="PDBsum" id="5ECA"/>
<dbReference type="PDBsum" id="5I11"/>
<dbReference type="PDBsum" id="5J5S"/>
<dbReference type="PDBsum" id="5K9I"/>
<dbReference type="PDBsum" id="5OAV"/>
<dbReference type="PDBsum" id="5OB0"/>
<dbReference type="PDBsum" id="5OB1"/>
<dbReference type="PDBsum" id="5OB2"/>
<dbReference type="PDBsum" id="5SWH"/>
<dbReference type="PDBsum" id="5SYS"/>
<dbReference type="PDBsum" id="5T0P"/>
<dbReference type="PDBsum" id="5TEH"/>
<dbReference type="PDBsum" id="5XP5"/>
<dbReference type="PDBsum" id="5XP7"/>
<dbReference type="PDBsum" id="6HVE"/>
<dbReference type="PDBsum" id="6HVF"/>
<dbReference type="PDBsum" id="6L8L"/>
<dbReference type="PDBsum" id="6WIW"/>
<dbReference type="PDBsum" id="6XVM"/>
<dbReference type="PDBsum" id="6XVN"/>
<dbReference type="PDBsum" id="6XVO"/>
<dbReference type="PDBsum" id="6XX2"/>
<dbReference type="PDBsum" id="6XX3"/>
<dbReference type="PDBsum" id="6XX4"/>
<dbReference type="PDBsum" id="6XX5"/>
<dbReference type="PDBsum" id="7A30"/>
<dbReference type="PDBsum" id="7A31"/>
<dbReference type="PDBsum" id="7A32"/>
<dbReference type="PDBsum" id="7A33"/>
<dbReference type="PDBsum" id="7A34"/>
<dbReference type="PDBsum" id="7A35"/>
<dbReference type="PDBsum" id="7A36"/>
<dbReference type="PDBsum" id="7A37"/>
<dbReference type="PDBsum" id="7A38"/>
<dbReference type="PDBsum" id="7A39"/>
<dbReference type="PDBsum" id="7A3A"/>
<dbReference type="PDBsum" id="7A3B"/>
<dbReference type="PDBsum" id="7A3C"/>
<dbReference type="PDBsum" id="7A3D"/>
<dbReference type="PDBsum" id="7A3E"/>
<dbReference type="PDBsum" id="7AH3"/>
<dbReference type="PDBsum" id="7D57"/>
<dbReference type="PDBsum" id="7D5O"/>
<dbReference type="PDBsum" id="7NER"/>
<dbReference type="PDBsum" id="7NES"/>
<dbReference type="PDBsum" id="7NET"/>
<dbReference type="PDBsum" id="7PVW"/>
<dbReference type="PDBsum" id="7PVX"/>
<dbReference type="PDBsum" id="7PVY"/>
<dbReference type="PDBsum" id="7PVZ"/>
<dbReference type="PDBsum" id="7PW0"/>
<dbReference type="PDBsum" id="7WF5"/>
<dbReference type="PDBsum" id="8K79"/>
<dbReference type="PDBsum" id="9BT8"/>
<dbReference type="PDBsum" id="9CX3"/>
<dbReference type="PDBsum" id="9CX9"/>
<dbReference type="BMRB" id="P00523"/>
<dbReference type="EMDB" id="EMD-44881"/>
<dbReference type="EMDB" id="EMD-45977"/>
<dbReference type="EMDB" id="EMD-45982"/>
<dbReference type="SMR" id="P00523"/>
<dbReference type="BioGRID" id="676691">
    <property type="interactions" value="4"/>
</dbReference>
<dbReference type="DIP" id="DIP-449N"/>
<dbReference type="ELM" id="P00523"/>
<dbReference type="FunCoup" id="P00523">
    <property type="interactions" value="995"/>
</dbReference>
<dbReference type="IntAct" id="P00523">
    <property type="interactions" value="19"/>
</dbReference>
<dbReference type="MINT" id="P00523"/>
<dbReference type="STRING" id="9031.ENSGALP00000006117"/>
<dbReference type="BindingDB" id="P00523"/>
<dbReference type="ChEMBL" id="CHEMBL3655"/>
<dbReference type="DrugCentral" id="P00523"/>
<dbReference type="iPTMnet" id="P00523"/>
<dbReference type="PaxDb" id="9031-ENSGALP00000006117"/>
<dbReference type="GeneID" id="396442"/>
<dbReference type="KEGG" id="gga:396442"/>
<dbReference type="CTD" id="6714"/>
<dbReference type="VEuPathDB" id="HostDB:geneid_396442"/>
<dbReference type="eggNOG" id="KOG0197">
    <property type="taxonomic scope" value="Eukaryota"/>
</dbReference>
<dbReference type="HOGENOM" id="CLU_000288_7_2_1"/>
<dbReference type="InParanoid" id="P00523"/>
<dbReference type="OrthoDB" id="4062651at2759"/>
<dbReference type="PhylomeDB" id="P00523"/>
<dbReference type="TreeFam" id="TF351634"/>
<dbReference type="BRENDA" id="2.7.10.2">
    <property type="organism ID" value="1306"/>
</dbReference>
<dbReference type="Reactome" id="R-GGA-1227986">
    <property type="pathway name" value="Signaling by ERBB2"/>
</dbReference>
<dbReference type="Reactome" id="R-GGA-1251985">
    <property type="pathway name" value="Nuclear signaling by ERBB4"/>
</dbReference>
<dbReference type="Reactome" id="R-GGA-1253288">
    <property type="pathway name" value="Downregulation of ERBB4 signaling"/>
</dbReference>
<dbReference type="Reactome" id="R-GGA-1257604">
    <property type="pathway name" value="PIP3 activates AKT signaling"/>
</dbReference>
<dbReference type="Reactome" id="R-GGA-1433557">
    <property type="pathway name" value="Signaling by SCF-KIT"/>
</dbReference>
<dbReference type="Reactome" id="R-GGA-1433559">
    <property type="pathway name" value="Regulation of KIT signaling"/>
</dbReference>
<dbReference type="Reactome" id="R-GGA-177929">
    <property type="pathway name" value="Signaling by EGFR"/>
</dbReference>
<dbReference type="Reactome" id="R-GGA-180292">
    <property type="pathway name" value="GAB1 signalosome"/>
</dbReference>
<dbReference type="Reactome" id="R-GGA-186763">
    <property type="pathway name" value="Downstream signal transduction"/>
</dbReference>
<dbReference type="Reactome" id="R-GGA-191650">
    <property type="pathway name" value="Regulation of gap junction activity"/>
</dbReference>
<dbReference type="Reactome" id="R-GGA-2029481">
    <property type="pathway name" value="FCGR activation"/>
</dbReference>
<dbReference type="Reactome" id="R-GGA-210990">
    <property type="pathway name" value="PECAM1 interactions"/>
</dbReference>
<dbReference type="Reactome" id="R-GGA-354192">
    <property type="pathway name" value="Integrin signaling"/>
</dbReference>
<dbReference type="Reactome" id="R-GGA-354194">
    <property type="pathway name" value="GRB2:SOS provides linkage to MAPK signaling for Integrins"/>
</dbReference>
<dbReference type="Reactome" id="R-GGA-372708">
    <property type="pathway name" value="p130Cas linkage to MAPK signaling for integrins"/>
</dbReference>
<dbReference type="Reactome" id="R-GGA-389356">
    <property type="pathway name" value="Co-stimulation by CD28"/>
</dbReference>
<dbReference type="Reactome" id="R-GGA-389513">
    <property type="pathway name" value="Co-inhibition by CTLA4"/>
</dbReference>
<dbReference type="Reactome" id="R-GGA-3928662">
    <property type="pathway name" value="EPHB-mediated forward signaling"/>
</dbReference>
<dbReference type="Reactome" id="R-GGA-3928663">
    <property type="pathway name" value="EPHA-mediated growth cone collapse"/>
</dbReference>
<dbReference type="Reactome" id="R-GGA-3928664">
    <property type="pathway name" value="Ephrin signaling"/>
</dbReference>
<dbReference type="Reactome" id="R-GGA-3928665">
    <property type="pathway name" value="EPH-ephrin mediated repulsion of cells"/>
</dbReference>
<dbReference type="Reactome" id="R-GGA-418592">
    <property type="pathway name" value="ADP signalling through P2Y purinoceptor 1"/>
</dbReference>
<dbReference type="Reactome" id="R-GGA-418594">
    <property type="pathway name" value="G alpha (i) signalling events"/>
</dbReference>
<dbReference type="Reactome" id="R-GGA-418885">
    <property type="pathway name" value="DCC mediated attractive signaling"/>
</dbReference>
<dbReference type="Reactome" id="R-GGA-430116">
    <property type="pathway name" value="GP1b-IX-V activation signalling"/>
</dbReference>
<dbReference type="Reactome" id="R-GGA-4420097">
    <property type="pathway name" value="VEGFA-VEGFR2 Pathway"/>
</dbReference>
<dbReference type="Reactome" id="R-GGA-456926">
    <property type="pathway name" value="Thrombin signalling through proteinase activated receptors (PARs)"/>
</dbReference>
<dbReference type="Reactome" id="R-GGA-5218921">
    <property type="pathway name" value="VEGFR2 mediated cell proliferation"/>
</dbReference>
<dbReference type="Reactome" id="R-GGA-5673000">
    <property type="pathway name" value="RAF activation"/>
</dbReference>
<dbReference type="Reactome" id="R-GGA-5674135">
    <property type="pathway name" value="MAP2K and MAPK activation"/>
</dbReference>
<dbReference type="Reactome" id="R-GGA-6811558">
    <property type="pathway name" value="PI5P, PP2A and IER3 Regulate PI3K/AKT Signaling"/>
</dbReference>
<dbReference type="Reactome" id="R-GGA-69231">
    <property type="pathway name" value="Cyclin D associated events in G1"/>
</dbReference>
<dbReference type="Reactome" id="R-GGA-8853659">
    <property type="pathway name" value="RET signaling"/>
</dbReference>
<dbReference type="Reactome" id="R-GGA-8874081">
    <property type="pathway name" value="MET activates PTK2 signaling"/>
</dbReference>
<dbReference type="Reactome" id="R-GGA-8934903">
    <property type="pathway name" value="Receptor Mediated Mitophagy"/>
</dbReference>
<dbReference type="Reactome" id="R-GGA-8941858">
    <property type="pathway name" value="Regulation of RUNX3 expression and activity"/>
</dbReference>
<dbReference type="Reactome" id="R-GGA-9009391">
    <property type="pathway name" value="Extra-nuclear estrogen signaling"/>
</dbReference>
<dbReference type="Reactome" id="R-GGA-9603381">
    <property type="pathway name" value="Activated NTRK3 signals through PI3K"/>
</dbReference>
<dbReference type="EvolutionaryTrace" id="P00523"/>
<dbReference type="PRO" id="PR:P00523"/>
<dbReference type="Proteomes" id="UP000000539">
    <property type="component" value="Chromosome 20"/>
</dbReference>
<dbReference type="Bgee" id="ENSGALG00000003855">
    <property type="expression patterns" value="Expressed in cerebellum and 12 other cell types or tissues"/>
</dbReference>
<dbReference type="GO" id="GO:0030054">
    <property type="term" value="C:cell junction"/>
    <property type="evidence" value="ECO:0000250"/>
    <property type="project" value="UniProtKB"/>
</dbReference>
<dbReference type="GO" id="GO:0005911">
    <property type="term" value="C:cell-cell junction"/>
    <property type="evidence" value="ECO:0000250"/>
    <property type="project" value="UniProtKB"/>
</dbReference>
<dbReference type="GO" id="GO:0005856">
    <property type="term" value="C:cytoskeleton"/>
    <property type="evidence" value="ECO:0000314"/>
    <property type="project" value="UniProtKB"/>
</dbReference>
<dbReference type="GO" id="GO:0005829">
    <property type="term" value="C:cytosol"/>
    <property type="evidence" value="ECO:0000304"/>
    <property type="project" value="Reactome"/>
</dbReference>
<dbReference type="GO" id="GO:0010008">
    <property type="term" value="C:endosome membrane"/>
    <property type="evidence" value="ECO:0000314"/>
    <property type="project" value="UniProtKB"/>
</dbReference>
<dbReference type="GO" id="GO:0005925">
    <property type="term" value="C:focal adhesion"/>
    <property type="evidence" value="ECO:0000250"/>
    <property type="project" value="UniProtKB"/>
</dbReference>
<dbReference type="GO" id="GO:0016020">
    <property type="term" value="C:membrane"/>
    <property type="evidence" value="ECO:0000250"/>
    <property type="project" value="UniProtKB"/>
</dbReference>
<dbReference type="GO" id="GO:0005743">
    <property type="term" value="C:mitochondrial inner membrane"/>
    <property type="evidence" value="ECO:0000250"/>
    <property type="project" value="UniProtKB"/>
</dbReference>
<dbReference type="GO" id="GO:0005634">
    <property type="term" value="C:nucleus"/>
    <property type="evidence" value="ECO:0000314"/>
    <property type="project" value="UniProtKB"/>
</dbReference>
<dbReference type="GO" id="GO:0048471">
    <property type="term" value="C:perinuclear region of cytoplasm"/>
    <property type="evidence" value="ECO:0000250"/>
    <property type="project" value="UniProtKB"/>
</dbReference>
<dbReference type="GO" id="GO:0005886">
    <property type="term" value="C:plasma membrane"/>
    <property type="evidence" value="ECO:0000314"/>
    <property type="project" value="UniProtKB"/>
</dbReference>
<dbReference type="GO" id="GO:0032991">
    <property type="term" value="C:protein-containing complex"/>
    <property type="evidence" value="ECO:0000315"/>
    <property type="project" value="CAFA"/>
</dbReference>
<dbReference type="GO" id="GO:0005524">
    <property type="term" value="F:ATP binding"/>
    <property type="evidence" value="ECO:0007669"/>
    <property type="project" value="UniProtKB-KW"/>
</dbReference>
<dbReference type="GO" id="GO:0071253">
    <property type="term" value="F:connexin binding"/>
    <property type="evidence" value="ECO:0000353"/>
    <property type="project" value="CAFA"/>
</dbReference>
<dbReference type="GO" id="GO:0020037">
    <property type="term" value="F:heme binding"/>
    <property type="evidence" value="ECO:0000250"/>
    <property type="project" value="UniProtKB"/>
</dbReference>
<dbReference type="GO" id="GO:0004715">
    <property type="term" value="F:non-membrane spanning protein tyrosine kinase activity"/>
    <property type="evidence" value="ECO:0000318"/>
    <property type="project" value="GO_Central"/>
</dbReference>
<dbReference type="GO" id="GO:0019903">
    <property type="term" value="F:protein phosphatase binding"/>
    <property type="evidence" value="ECO:0000353"/>
    <property type="project" value="UniProtKB"/>
</dbReference>
<dbReference type="GO" id="GO:0004713">
    <property type="term" value="F:protein tyrosine kinase activity"/>
    <property type="evidence" value="ECO:0000269"/>
    <property type="project" value="Reactome"/>
</dbReference>
<dbReference type="GO" id="GO:0005102">
    <property type="term" value="F:signaling receptor binding"/>
    <property type="evidence" value="ECO:0000318"/>
    <property type="project" value="GO_Central"/>
</dbReference>
<dbReference type="GO" id="GO:0007155">
    <property type="term" value="P:cell adhesion"/>
    <property type="evidence" value="ECO:0000318"/>
    <property type="project" value="GO_Central"/>
</dbReference>
<dbReference type="GO" id="GO:0030154">
    <property type="term" value="P:cell differentiation"/>
    <property type="evidence" value="ECO:0000318"/>
    <property type="project" value="GO_Central"/>
</dbReference>
<dbReference type="GO" id="GO:0007173">
    <property type="term" value="P:epidermal growth factor receptor signaling pathway"/>
    <property type="evidence" value="ECO:0000318"/>
    <property type="project" value="GO_Central"/>
</dbReference>
<dbReference type="GO" id="GO:0002376">
    <property type="term" value="P:immune system process"/>
    <property type="evidence" value="ECO:0007669"/>
    <property type="project" value="UniProtKB-KW"/>
</dbReference>
<dbReference type="GO" id="GO:2001237">
    <property type="term" value="P:negative regulation of extrinsic apoptotic signaling pathway"/>
    <property type="evidence" value="ECO:0000318"/>
    <property type="project" value="GO_Central"/>
</dbReference>
<dbReference type="GO" id="GO:2001243">
    <property type="term" value="P:negative regulation of intrinsic apoptotic signaling pathway"/>
    <property type="evidence" value="ECO:0000318"/>
    <property type="project" value="GO_Central"/>
</dbReference>
<dbReference type="GO" id="GO:0050847">
    <property type="term" value="P:progesterone receptor signaling pathway"/>
    <property type="evidence" value="ECO:0000318"/>
    <property type="project" value="GO_Central"/>
</dbReference>
<dbReference type="GO" id="GO:0051726">
    <property type="term" value="P:regulation of cell cycle"/>
    <property type="evidence" value="ECO:0000314"/>
    <property type="project" value="UniProtKB"/>
</dbReference>
<dbReference type="CDD" id="cd05071">
    <property type="entry name" value="PTKc_Src"/>
    <property type="match status" value="1"/>
</dbReference>
<dbReference type="CDD" id="cd10365">
    <property type="entry name" value="SH2_Src_Src"/>
    <property type="match status" value="1"/>
</dbReference>
<dbReference type="CDD" id="cd12008">
    <property type="entry name" value="SH3_Src"/>
    <property type="match status" value="1"/>
</dbReference>
<dbReference type="FunFam" id="1.10.510.10:FF:000553">
    <property type="entry name" value="Tyrosine-protein kinase"/>
    <property type="match status" value="1"/>
</dbReference>
<dbReference type="FunFam" id="2.30.30.40:FF:000083">
    <property type="entry name" value="Tyrosine-protein kinase"/>
    <property type="match status" value="1"/>
</dbReference>
<dbReference type="FunFam" id="3.30.200.20:FF:000016">
    <property type="entry name" value="Tyrosine-protein kinase"/>
    <property type="match status" value="1"/>
</dbReference>
<dbReference type="FunFam" id="3.30.505.10:FF:000001">
    <property type="entry name" value="Tyrosine-protein kinase"/>
    <property type="match status" value="1"/>
</dbReference>
<dbReference type="Gene3D" id="3.30.200.20">
    <property type="entry name" value="Phosphorylase Kinase, domain 1"/>
    <property type="match status" value="1"/>
</dbReference>
<dbReference type="Gene3D" id="3.30.505.10">
    <property type="entry name" value="SH2 domain"/>
    <property type="match status" value="1"/>
</dbReference>
<dbReference type="Gene3D" id="2.30.30.40">
    <property type="entry name" value="SH3 Domains"/>
    <property type="match status" value="1"/>
</dbReference>
<dbReference type="Gene3D" id="1.10.510.10">
    <property type="entry name" value="Transferase(Phosphotransferase) domain 1"/>
    <property type="match status" value="1"/>
</dbReference>
<dbReference type="InterPro" id="IPR011009">
    <property type="entry name" value="Kinase-like_dom_sf"/>
</dbReference>
<dbReference type="InterPro" id="IPR050198">
    <property type="entry name" value="Non-receptor_tyrosine_kinases"/>
</dbReference>
<dbReference type="InterPro" id="IPR000719">
    <property type="entry name" value="Prot_kinase_dom"/>
</dbReference>
<dbReference type="InterPro" id="IPR017441">
    <property type="entry name" value="Protein_kinase_ATP_BS"/>
</dbReference>
<dbReference type="InterPro" id="IPR001245">
    <property type="entry name" value="Ser-Thr/Tyr_kinase_cat_dom"/>
</dbReference>
<dbReference type="InterPro" id="IPR000980">
    <property type="entry name" value="SH2"/>
</dbReference>
<dbReference type="InterPro" id="IPR036860">
    <property type="entry name" value="SH2_dom_sf"/>
</dbReference>
<dbReference type="InterPro" id="IPR036028">
    <property type="entry name" value="SH3-like_dom_sf"/>
</dbReference>
<dbReference type="InterPro" id="IPR001452">
    <property type="entry name" value="SH3_domain"/>
</dbReference>
<dbReference type="InterPro" id="IPR008266">
    <property type="entry name" value="Tyr_kinase_AS"/>
</dbReference>
<dbReference type="InterPro" id="IPR020635">
    <property type="entry name" value="Tyr_kinase_cat_dom"/>
</dbReference>
<dbReference type="PANTHER" id="PTHR24418">
    <property type="entry name" value="TYROSINE-PROTEIN KINASE"/>
    <property type="match status" value="1"/>
</dbReference>
<dbReference type="Pfam" id="PF07714">
    <property type="entry name" value="PK_Tyr_Ser-Thr"/>
    <property type="match status" value="1"/>
</dbReference>
<dbReference type="Pfam" id="PF00017">
    <property type="entry name" value="SH2"/>
    <property type="match status" value="1"/>
</dbReference>
<dbReference type="Pfam" id="PF00018">
    <property type="entry name" value="SH3_1"/>
    <property type="match status" value="1"/>
</dbReference>
<dbReference type="PRINTS" id="PR00401">
    <property type="entry name" value="SH2DOMAIN"/>
</dbReference>
<dbReference type="PRINTS" id="PR00452">
    <property type="entry name" value="SH3DOMAIN"/>
</dbReference>
<dbReference type="PRINTS" id="PR00109">
    <property type="entry name" value="TYRKINASE"/>
</dbReference>
<dbReference type="SMART" id="SM00252">
    <property type="entry name" value="SH2"/>
    <property type="match status" value="1"/>
</dbReference>
<dbReference type="SMART" id="SM00326">
    <property type="entry name" value="SH3"/>
    <property type="match status" value="1"/>
</dbReference>
<dbReference type="SMART" id="SM00219">
    <property type="entry name" value="TyrKc"/>
    <property type="match status" value="1"/>
</dbReference>
<dbReference type="SUPFAM" id="SSF56112">
    <property type="entry name" value="Protein kinase-like (PK-like)"/>
    <property type="match status" value="1"/>
</dbReference>
<dbReference type="SUPFAM" id="SSF55550">
    <property type="entry name" value="SH2 domain"/>
    <property type="match status" value="1"/>
</dbReference>
<dbReference type="SUPFAM" id="SSF50044">
    <property type="entry name" value="SH3-domain"/>
    <property type="match status" value="1"/>
</dbReference>
<dbReference type="PROSITE" id="PS00107">
    <property type="entry name" value="PROTEIN_KINASE_ATP"/>
    <property type="match status" value="1"/>
</dbReference>
<dbReference type="PROSITE" id="PS50011">
    <property type="entry name" value="PROTEIN_KINASE_DOM"/>
    <property type="match status" value="1"/>
</dbReference>
<dbReference type="PROSITE" id="PS00109">
    <property type="entry name" value="PROTEIN_KINASE_TYR"/>
    <property type="match status" value="1"/>
</dbReference>
<dbReference type="PROSITE" id="PS50001">
    <property type="entry name" value="SH2"/>
    <property type="match status" value="1"/>
</dbReference>
<dbReference type="PROSITE" id="PS50002">
    <property type="entry name" value="SH3"/>
    <property type="match status" value="1"/>
</dbReference>
<comment type="function">
    <text evidence="3 11 12 19 24 25 26">Non-receptor protein tyrosine kinase which is activated following engagement of many different classes of cellular receptors including immune response receptors, integrins and other adhesion receptors, receptor protein tyrosine kinases, G protein-coupled receptors as well as cytokine receptors. Participates in signaling pathways that control a diverse spectrum of biological activities including gene transcription, immune response, cell adhesion, cell cycle progression, apoptosis, migration, and transformation. Due to functional redundancy between members of the SRC kinase family, identification of the specific role of each SRC kinase is very difficult. SRC appears to be one of the primary kinases activated following engagement of receptors and plays a role in the activation of other protein tyrosine kinase (PTK) families. Receptor clustering or dimerization leads to recruitment of SRC to the receptor complexes where it phosphorylates the tyrosine residues within the receptor cytoplasmic domains. Plays an important role in the regulation of cytoskeletal organization through phosphorylation of specific substrates involved in this process (Probable). When cells adhere via focal adhesions to the extracellular matrix, signals are transmitted by integrins into the cell resulting in tyrosine phosphorylation of a number of focal adhesion proteins, including PTK2/FAK1 and paxillin (PXN) (By similarity). Also active at the sites of cell-cell contact adherens junctions and at gap junctions. Implicated in the regulation of pre-mRNA-processing (Probable). Might be involved not only in mediating the transduction of mitogenic signals at the level of the plasma membrane but also in controlling progression through the cell cycle via interaction with regulatory proteins in the nucleus (PubMed:1717492, PubMed:8550628). Involved in anchorage-independent cell growth (PubMed:19307596).</text>
</comment>
<comment type="catalytic activity">
    <reaction evidence="7">
        <text>L-tyrosyl-[protein] + ATP = O-phospho-L-tyrosyl-[protein] + ADP + H(+)</text>
        <dbReference type="Rhea" id="RHEA:10596"/>
        <dbReference type="Rhea" id="RHEA-COMP:10136"/>
        <dbReference type="Rhea" id="RHEA-COMP:20101"/>
        <dbReference type="ChEBI" id="CHEBI:15378"/>
        <dbReference type="ChEBI" id="CHEBI:30616"/>
        <dbReference type="ChEBI" id="CHEBI:46858"/>
        <dbReference type="ChEBI" id="CHEBI:61978"/>
        <dbReference type="ChEBI" id="CHEBI:456216"/>
        <dbReference type="EC" id="2.7.10.2"/>
    </reaction>
</comment>
<comment type="activity regulation">
    <text evidence="1">Becomes activated when its major tyrosine phosphorylation site is not phosphorylated. It can also be activated by point mutations as well as by truncations at the C-terminal end or by other mutations. Heme regulates its activity by enhancing the phosphorylation on Tyr-527 (By similarity).</text>
</comment>
<comment type="subunit">
    <text evidence="10 18 21">Forms a complex with polyoma virus middle T antigen. Interacts with AFAP-110. Interacts with GJA1 and PXN.</text>
</comment>
<comment type="interaction">
    <interactant intactId="EBI-848039">
        <id>P00523</id>
    </interactant>
    <interactant intactId="EBI-8562073">
        <id>Q90738</id>
        <label>AFAP1</label>
    </interactant>
    <organismsDiffer>false</organismsDiffer>
    <experiments>3</experiments>
</comment>
<comment type="interaction">
    <interactant intactId="EBI-848039">
        <id>P00523</id>
    </interactant>
    <interactant intactId="EBI-2896409">
        <id>Q00944</id>
        <label>PTK2</label>
    </interactant>
    <organismsDiffer>false</organismsDiffer>
    <experiments>3</experiments>
</comment>
<comment type="interaction">
    <interactant intactId="EBI-848039">
        <id>P00523</id>
    </interactant>
    <interactant intactId="EBI-698517">
        <id>Q9QWY8-1</id>
        <label>Asap1</label>
    </interactant>
    <organismsDiffer>true</organismsDiffer>
    <experiments>3</experiments>
</comment>
<comment type="interaction">
    <interactant intactId="EBI-848039">
        <id>P00523</id>
    </interactant>
    <interactant intactId="EBI-698524">
        <id>Q9QWY8-2</id>
        <label>Asap1</label>
    </interactant>
    <organismsDiffer>true</organismsDiffer>
    <experiments>2</experiments>
</comment>
<comment type="interaction">
    <interactant intactId="EBI-848039">
        <id>P00523</id>
    </interactant>
    <interactant intactId="EBI-5658997">
        <id>Q9NZA1</id>
        <label>CLIC5</label>
    </interactant>
    <organismsDiffer>true</organismsDiffer>
    <experiments>2</experiments>
</comment>
<comment type="interaction">
    <interactant intactId="EBI-848039">
        <id>P00523</id>
    </interactant>
    <interactant intactId="EBI-1380630">
        <id>P41240</id>
        <label>CSK</label>
    </interactant>
    <organismsDiffer>true</organismsDiffer>
    <experiments>7</experiments>
</comment>
<comment type="interaction">
    <interactant intactId="EBI-848039">
        <id>P00523</id>
    </interactant>
    <interactant intactId="EBI-2817289">
        <id>Q9Y4D1</id>
        <label>DAAM1</label>
    </interactant>
    <organismsDiffer>true</organismsDiffer>
    <experiments>3</experiments>
</comment>
<comment type="interaction">
    <interactant intactId="EBI-848039">
        <id>P00523</id>
    </interactant>
    <interactant intactId="EBI-78473">
        <id>P03372</id>
        <label>ESR1</label>
    </interactant>
    <organismsDiffer>true</organismsDiffer>
    <experiments>2</experiments>
</comment>
<comment type="interaction">
    <interactant intactId="EBI-848039">
        <id>P00523</id>
    </interactant>
    <interactant intactId="EBI-771231">
        <id>O88703</id>
        <label>Hcn2</label>
    </interactant>
    <organismsDiffer>true</organismsDiffer>
    <experiments>5</experiments>
</comment>
<comment type="interaction">
    <interactant intactId="EBI-848039">
        <id>P00523</id>
    </interactant>
    <interactant intactId="EBI-6597520">
        <id>P18052</id>
        <label>Ptpra</label>
    </interactant>
    <organismsDiffer>true</organismsDiffer>
    <experiments>2</experiments>
</comment>
<comment type="interaction">
    <interactant intactId="EBI-848039">
        <id>P00523</id>
    </interactant>
    <interactant intactId="EBI-2609645">
        <id>P18433</id>
        <label>PTPRA</label>
    </interactant>
    <organismsDiffer>true</organismsDiffer>
    <experiments>4</experiments>
</comment>
<comment type="interaction">
    <interactant intactId="EBI-848039">
        <id>P00523</id>
    </interactant>
    <interactant intactId="EBI-775607">
        <id>Q9QWI6-2</id>
        <label>Srcin1</label>
    </interactant>
    <organismsDiffer>true</organismsDiffer>
    <experiments>2</experiments>
</comment>
<comment type="subcellular location">
    <subcellularLocation>
        <location evidence="9 18">Cell membrane</location>
        <topology evidence="2">Lipid-anchor</topology>
    </subcellularLocation>
    <subcellularLocation>
        <location evidence="2">Mitochondrion inner membrane</location>
    </subcellularLocation>
    <subcellularLocation>
        <location evidence="9">Endosome membrane</location>
        <topology evidence="9">Peripheral membrane protein</topology>
    </subcellularLocation>
    <subcellularLocation>
        <location evidence="19">Nucleus</location>
    </subcellularLocation>
    <subcellularLocation>
        <location evidence="18">Cytoplasm</location>
        <location evidence="18">Cytoskeleton</location>
    </subcellularLocation>
    <subcellularLocation>
        <location evidence="2">Cell junction</location>
        <location evidence="2">Focal adhesion</location>
    </subcellularLocation>
    <subcellularLocation>
        <location evidence="3">Cytoplasm</location>
        <location evidence="3">Perinuclear region</location>
    </subcellularLocation>
    <subcellularLocation>
        <location evidence="3">Cell junction</location>
    </subcellularLocation>
    <text evidence="2 3">Localizes to focal adhesion sites following integrin engagement (By similarity). Localization to focal adhesion sites requires myristoylation and the SH3 domain.</text>
</comment>
<comment type="alternative products">
    <event type="alternative splicing"/>
    <isoform>
        <id>P00523-1</id>
        <name>1</name>
        <sequence type="displayed"/>
    </isoform>
    <isoform>
        <id>P00523-2</id>
        <name>2</name>
        <sequence type="described" ref="VSP_011844 VSP_011845"/>
    </isoform>
</comment>
<comment type="tissue specificity">
    <text>Expressed to high levels, and with a high degree of kinase activity, in certain fully differentiated cells such as neurons, platelets and macrophages. Isoform 1 is widely expressed. Isoform 2 is expressed only in the muscle.</text>
</comment>
<comment type="PTM">
    <text evidence="1">Myristoylated at Gly-2, and this is essential for targeting to membranes.</text>
</comment>
<comment type="PTM">
    <text evidence="1">Dephosphorylated at Tyr-527 by PTPRJ. Phosphorylated on Tyr-527 by c-Src kinase (CSK). The phosphorylated form is termed pp60c-src. Dephosphorylated by PTPRJ at Tyr-416. Normally maintained in an inactive conformation with the SH2 domain engaged with Tyr-527, the SH3 domain engaged with the SH2-kinase linker, and Tyr-416 dephosphorylated. Dephosphorylation of Tyr-527 as a result of protein tyrosine phosphatase (PTP) action disrupts the intramolecular interaction between the SH2 domain and Tyr-527, Tyr-416 can then become autophosphorylated, resulting in SRC activation. Phosphorylation of Tyr-527 by CSK allows this interaction to reform, resulting in SRC inactivation (By similarity).</text>
</comment>
<comment type="PTM">
    <text evidence="13">S-nitrosylation is important for activation of its kinase activity.</text>
</comment>
<comment type="miscellaneous">
    <molecule>Isoform 2</molecule>
    <text evidence="23">Membrane-bound.</text>
</comment>
<comment type="similarity">
    <text evidence="4">Belongs to the protein kinase superfamily. Tyr protein kinase family. SRC subfamily.</text>
</comment>
<proteinExistence type="evidence at protein level"/>
<name>SRC_CHICK</name>
<organism>
    <name type="scientific">Gallus gallus</name>
    <name type="common">Chicken</name>
    <dbReference type="NCBI Taxonomy" id="9031"/>
    <lineage>
        <taxon>Eukaryota</taxon>
        <taxon>Metazoa</taxon>
        <taxon>Chordata</taxon>
        <taxon>Craniata</taxon>
        <taxon>Vertebrata</taxon>
        <taxon>Euteleostomi</taxon>
        <taxon>Archelosauria</taxon>
        <taxon>Archosauria</taxon>
        <taxon>Dinosauria</taxon>
        <taxon>Saurischia</taxon>
        <taxon>Theropoda</taxon>
        <taxon>Coelurosauria</taxon>
        <taxon>Aves</taxon>
        <taxon>Neognathae</taxon>
        <taxon>Galloanserae</taxon>
        <taxon>Galliformes</taxon>
        <taxon>Phasianidae</taxon>
        <taxon>Phasianinae</taxon>
        <taxon>Gallus</taxon>
    </lineage>
</organism>
<evidence type="ECO:0000250" key="1"/>
<evidence type="ECO:0000250" key="2">
    <source>
        <dbReference type="UniProtKB" id="P05480"/>
    </source>
</evidence>
<evidence type="ECO:0000250" key="3">
    <source>
        <dbReference type="UniProtKB" id="P12931"/>
    </source>
</evidence>
<evidence type="ECO:0000255" key="4">
    <source>
        <dbReference type="PROSITE-ProRule" id="PRU00159"/>
    </source>
</evidence>
<evidence type="ECO:0000255" key="5">
    <source>
        <dbReference type="PROSITE-ProRule" id="PRU00191"/>
    </source>
</evidence>
<evidence type="ECO:0000255" key="6">
    <source>
        <dbReference type="PROSITE-ProRule" id="PRU00192"/>
    </source>
</evidence>
<evidence type="ECO:0000255" key="7">
    <source>
        <dbReference type="PROSITE-ProRule" id="PRU10028"/>
    </source>
</evidence>
<evidence type="ECO:0000256" key="8">
    <source>
        <dbReference type="SAM" id="MobiDB-lite"/>
    </source>
</evidence>
<evidence type="ECO:0000269" key="9">
    <source>
    </source>
</evidence>
<evidence type="ECO:0000269" key="10">
    <source>
    </source>
</evidence>
<evidence type="ECO:0000269" key="11">
    <source>
    </source>
</evidence>
<evidence type="ECO:0000269" key="12">
    <source>
    </source>
</evidence>
<evidence type="ECO:0000269" key="13">
    <source>
    </source>
</evidence>
<evidence type="ECO:0000269" key="14">
    <source>
    </source>
</evidence>
<evidence type="ECO:0000269" key="15">
    <source>
    </source>
</evidence>
<evidence type="ECO:0000269" key="16">
    <source>
    </source>
</evidence>
<evidence type="ECO:0000269" key="17">
    <source>
    </source>
</evidence>
<evidence type="ECO:0000269" key="18">
    <source>
    </source>
</evidence>
<evidence type="ECO:0000269" key="19">
    <source>
    </source>
</evidence>
<evidence type="ECO:0000269" key="20">
    <source>
    </source>
</evidence>
<evidence type="ECO:0000269" key="21">
    <source>
    </source>
</evidence>
<evidence type="ECO:0000303" key="22">
    <source>
    </source>
</evidence>
<evidence type="ECO:0000305" key="23"/>
<evidence type="ECO:0000305" key="24">
    <source>
    </source>
</evidence>
<evidence type="ECO:0000305" key="25">
    <source>
    </source>
</evidence>
<evidence type="ECO:0000305" key="26">
    <source>
    </source>
</evidence>
<evidence type="ECO:0007829" key="27">
    <source>
        <dbReference type="PDB" id="1F1W"/>
    </source>
</evidence>
<evidence type="ECO:0007829" key="28">
    <source>
        <dbReference type="PDB" id="1P13"/>
    </source>
</evidence>
<evidence type="ECO:0007829" key="29">
    <source>
        <dbReference type="PDB" id="2PTK"/>
    </source>
</evidence>
<evidence type="ECO:0007829" key="30">
    <source>
        <dbReference type="PDB" id="2QI8"/>
    </source>
</evidence>
<evidence type="ECO:0007829" key="31">
    <source>
        <dbReference type="PDB" id="3GEQ"/>
    </source>
</evidence>
<evidence type="ECO:0007829" key="32">
    <source>
        <dbReference type="PDB" id="3U4W"/>
    </source>
</evidence>
<evidence type="ECO:0007829" key="33">
    <source>
        <dbReference type="PDB" id="4LE9"/>
    </source>
</evidence>
<evidence type="ECO:0007829" key="34">
    <source>
        <dbReference type="PDB" id="5BMM"/>
    </source>
</evidence>
<evidence type="ECO:0007829" key="35">
    <source>
        <dbReference type="PDB" id="6XVM"/>
    </source>
</evidence>
<evidence type="ECO:0007829" key="36">
    <source>
        <dbReference type="PDB" id="7WF5"/>
    </source>
</evidence>
<evidence type="ECO:0007829" key="37">
    <source>
        <dbReference type="PDB" id="9CX3"/>
    </source>
</evidence>
<reference key="1">
    <citation type="journal article" date="1983" name="Cell">
        <title>Structure and sequence of the cellular gene homologous to the RSV src gene and the mechanism for generating the transforming virus.</title>
        <authorList>
            <person name="Takeya T."/>
            <person name="Hanafusa H."/>
        </authorList>
    </citation>
    <scope>NUCLEOTIDE SEQUENCE [MRNA] (ISOFORM 1)</scope>
</reference>
<reference key="2">
    <citation type="journal article" date="1983" name="Cell">
        <authorList>
            <person name="Takeya T."/>
            <person name="Hanafusa H."/>
        </authorList>
    </citation>
    <scope>ERRATUM OF PUBMED:6299580</scope>
    <scope>SEQUENCE REVISION TO 526</scope>
</reference>
<reference key="3">
    <citation type="journal article" date="1990" name="Mol. Cell. Biol.">
        <title>An alternative non-tyrosine protein kinase product of the c-src gene in chicken skeletal muscle.</title>
        <authorList>
            <person name="Dorai T."/>
            <person name="Wang L.-H."/>
        </authorList>
    </citation>
    <scope>NUCLEOTIDE SEQUENCE [MRNA] (ISOFORM 2)</scope>
    <source>
        <tissue>Pectoralis muscle</tissue>
    </source>
</reference>
<reference key="4">
    <citation type="journal article" date="1996" name="Eur. J. Biochem.">
        <title>The purification and characterization of the catalytic domain of Src expressed in Schizosaccharomyces pombe. Comparison of unphosphorylated and tyrosine phosphorylated species.</title>
        <authorList>
            <person name="Weijland A."/>
            <person name="Neubauer G."/>
            <person name="Courtneidge S.A."/>
            <person name="Mann M."/>
            <person name="Wierenga R.K."/>
            <person name="Superti-Furga G."/>
        </authorList>
    </citation>
    <scope>NUCLEOTIDE SEQUENCE [GENOMIC DNA]</scope>
    <scope>PHOSPHORYLATION AT TYR-416 AND TYR-436</scope>
</reference>
<reference key="5">
    <citation type="journal article" date="1982" name="J. Virol.">
        <title>DNA sequence of the viral and cellular src gene of chickens. II. Comparison of the src genes of two strains of Avian sarcoma virus and of the cellular homolog.</title>
        <authorList>
            <person name="Takeya T."/>
            <person name="Hanafusa H."/>
        </authorList>
    </citation>
    <scope>NUCLEOTIDE SEQUENCE [GENOMIC DNA] OF 1-7</scope>
</reference>
<reference key="6">
    <citation type="journal article" date="1991" name="Mol. Cell. Biol.">
        <title>Analysis of cDNAs of the proto-oncogene c-src: heterogeneity in 5' exons and possible mechanism for the genesis of the 3' end of v-src.</title>
        <authorList>
            <person name="Dorai T."/>
            <person name="Levy J.B."/>
            <person name="Kang L."/>
            <person name="Brugge J.S."/>
            <person name="Wang L.-H."/>
        </authorList>
    </citation>
    <scope>NUCLEOTIDE SEQUENCE [MRNA] OF 1-19 AND 485-534 (ISOFORM 1)</scope>
</reference>
<reference key="7">
    <citation type="journal article" date="1984" name="Nature">
        <title>Direct evidence that oncogenic tyrosine kinases and cyclic AMP-dependent protein kinase have homologous ATP-binding sites.</title>
        <authorList>
            <person name="Kamps M.P."/>
            <person name="Taylor S.S."/>
            <person name="Sefton B.M."/>
        </authorList>
    </citation>
    <scope>ATP-BINDING SITE</scope>
</reference>
<reference key="8">
    <citation type="journal article" date="1985" name="Cell">
        <title>Protein kinase C phosphorylates pp60src at a novel site.</title>
        <authorList>
            <person name="Gould K.L."/>
            <person name="Woodgett J.R."/>
            <person name="Cooper J.A."/>
            <person name="Buss J.E."/>
            <person name="Shalloway D."/>
            <person name="Hunter T."/>
        </authorList>
    </citation>
    <scope>PHOSPHORYLATION AT SER-12</scope>
</reference>
<reference key="9">
    <citation type="journal article" date="1981" name="Proc. Natl. Acad. Sci. U.S.A.">
        <title>Characterization of sites for tyrosine phosphorylation in the transforming protein of Rous sarcoma virus (pp60v-src) and its normal cellular homologue (pp60c-src).</title>
        <authorList>
            <person name="Smart J.E."/>
            <person name="Oppermann H."/>
            <person name="Czernilofsky A.P."/>
            <person name="Purchio A.F."/>
            <person name="Erikson R.L."/>
            <person name="Bishop J.M."/>
        </authorList>
    </citation>
    <scope>PHOSPHORYLATION AT TYR-416</scope>
</reference>
<reference key="10">
    <citation type="journal article" date="1986" name="Science">
        <title>Tyr527 is phosphorylated in pp60c-src: implications for regulation.</title>
        <authorList>
            <person name="Cooper J.A."/>
            <person name="Gould K.L."/>
            <person name="Cartwright C.A."/>
            <person name="Hunter T."/>
        </authorList>
    </citation>
    <scope>PHOSPHORYLATION AT TYR-527</scope>
</reference>
<reference key="11">
    <citation type="journal article" date="1989" name="Cell">
        <title>Purified maturation promoting factor phosphorylates pp60c-src at the sites phosphorylated during fibroblast mitosis.</title>
        <authorList>
            <person name="Shenoy S."/>
            <person name="Choi J.K."/>
            <person name="Bagrodia S."/>
            <person name="Copeland T.D."/>
            <person name="Maller J.L."/>
            <person name="Shalloway D."/>
        </authorList>
    </citation>
    <scope>PHOSPHORYLATION AT THR-34; THR-46 AND SER-72</scope>
</reference>
<reference key="12">
    <citation type="journal article" date="1991" name="J. Cell Biol.">
        <title>Signal transduction by nerve growth factor and fibroblast growth factor in PC12 cells requires a sequence of src and ras actions.</title>
        <authorList>
            <person name="Kremer N.E."/>
            <person name="D'Arcangelo G."/>
            <person name="Thomas S.M."/>
            <person name="DeMarco M."/>
            <person name="Brugge J.S."/>
            <person name="Halegoua S."/>
        </authorList>
    </citation>
    <scope>FUNCTION IN THE NGF AND FGF SIGNALING PATHWAYS</scope>
</reference>
<reference key="13">
    <citation type="journal article" date="1992" name="J. Cell Biol.">
        <title>Association of p60c-src with endosomal membranes in mammalian fibroblasts.</title>
        <authorList>
            <person name="Kaplan K.B."/>
            <person name="Swedlow J.R."/>
            <person name="Varmus H.E."/>
            <person name="Morgan D.O."/>
        </authorList>
    </citation>
    <scope>SUBCELLULAR LOCATION</scope>
</reference>
<reference key="14">
    <citation type="journal article" date="1993" name="J. Biol. Chem.">
        <title>Detection of Src homology 3-binding proteins, including paxillin, in normal and v-Src-transformed Balb/c 3T3 cells.</title>
        <authorList>
            <person name="Weng Z."/>
            <person name="Taylor J.A."/>
            <person name="Turner C.E."/>
            <person name="Brugge J.S."/>
            <person name="Seidel-Dugan C."/>
        </authorList>
    </citation>
    <scope>SUBCELLULAR LOCATION</scope>
    <scope>INTERACTION WITH PXN</scope>
</reference>
<reference key="15">
    <citation type="journal article" date="1996" name="J. Biol. Chem.">
        <title>Nuclear signaling by endothelin-1 requires Src protein-tyrosine kinases.</title>
        <authorList>
            <person name="Simonson M.S."/>
            <person name="Wang Y."/>
            <person name="Herman W.H."/>
        </authorList>
    </citation>
    <scope>FUNCTION IN THE EDN1 SIGNALING PATHWAY</scope>
    <scope>SUBCELLULAR LOCATION</scope>
</reference>
<reference key="16">
    <citation type="journal article" date="1998" name="Mol. Carcinog.">
        <title>Formation of a stable src-AFAP-110 complex through either an amino-terminal or a carboxy-terminal SH2-binding motif.</title>
        <authorList>
            <person name="Guappone A.C."/>
            <person name="Weimer T."/>
            <person name="Flynn D.C."/>
        </authorList>
    </citation>
    <scope>INTERACTION WITH AFAP-110</scope>
</reference>
<reference key="17">
    <citation type="journal article" date="2004" name="J. Biol. Chem.">
        <title>Structural changes in the carboxyl terminus of the gap junction protein connexin43 indicates signaling between binding domains for c-Src and zonula occludens-1.</title>
        <authorList>
            <person name="Sorgen P.L."/>
            <person name="Duffy H.S."/>
            <person name="Sahoo P."/>
            <person name="Coombs W."/>
            <person name="Delmar M."/>
            <person name="Spray D.C."/>
        </authorList>
    </citation>
    <scope>INTERACTION WITH GJA1</scope>
</reference>
<reference key="18">
    <citation type="journal article" date="2009" name="J. Cell Biol.">
        <title>Reversion-induced LIM interaction with Src reveals a novel Src inactivation cycle.</title>
        <authorList>
            <person name="Zhang Y."/>
            <person name="Tu Y."/>
            <person name="Zhao J."/>
            <person name="Chen K."/>
            <person name="Wu C."/>
        </authorList>
    </citation>
    <scope>FUNCTION</scope>
    <scope>MUTAGENESIS OF TYR-527</scope>
</reference>
<reference key="19">
    <citation type="journal article" date="2010" name="J. Biol. Chem.">
        <title>S-nitrosylation at cysteine 498 of c-Src tyrosine kinase regulates nitric oxide-mediated cell invasion.</title>
        <authorList>
            <person name="Rahman M.A."/>
            <person name="Senga T."/>
            <person name="Ito S."/>
            <person name="Hyodo T."/>
            <person name="Hasegawa H."/>
            <person name="Hamaguchi M."/>
        </authorList>
    </citation>
    <scope>S-NITROSYLATION AT CYS-498</scope>
    <scope>MUTAGENESIS OF CYS-498</scope>
</reference>
<reference key="20">
    <citation type="journal article" date="1996" name="Biochim. Biophys. Acta">
        <title>Regulation, substrates and functions of src.</title>
        <authorList>
            <person name="Brown M.T."/>
            <person name="Cooper J.A."/>
        </authorList>
    </citation>
    <scope>REVIEW ON FUNCTION</scope>
</reference>
<reference key="21">
    <citation type="journal article" date="1997" name="Annu. Rev. Cell Dev. Biol.">
        <title>Cellular functions regulated by Src family kinases.</title>
        <authorList>
            <person name="Thomas S.M."/>
            <person name="Brugge J.S."/>
        </authorList>
    </citation>
    <scope>REVIEW ON FUNCTION</scope>
</reference>
<reference key="22">
    <citation type="journal article" date="2002" name="Cell. Mol. Life Sci.">
        <title>Novel regulation and function of Src tyrosine kinase.</title>
        <authorList>
            <person name="Ma Y.C."/>
            <person name="Huang X.Y."/>
        </authorList>
    </citation>
    <scope>REVIEW ON FUNCTION</scope>
</reference>
<reference key="23">
    <citation type="journal article" date="1997" name="J. Mol. Biol.">
        <title>The 2.35 A crystal structure of the inactivated form of chicken Src: a dynamic molecule with multiple regulatory interactions.</title>
        <authorList>
            <person name="Williams J.C."/>
            <person name="Weijland A."/>
            <person name="Gonfloni S."/>
            <person name="Thompson A."/>
            <person name="Courtneidge S.A."/>
            <person name="Superti-Furga G."/>
            <person name="Wierenga R.K."/>
        </authorList>
    </citation>
    <scope>X-RAY CRYSTALLOGRAPHY (2.35 ANGSTROMS) OF 83-533</scope>
</reference>
<reference key="24">
    <citation type="journal article" date="1993" name="FEBS Lett.">
        <title>1H and 15N assignments and secondary structure of the Src SH3 domain.</title>
        <authorList>
            <person name="Yu H."/>
            <person name="Rosen M.K."/>
            <person name="Schreiber S.L."/>
        </authorList>
    </citation>
    <scope>STRUCTURE BY NMR OF 81-140</scope>
</reference>
<gene>
    <name type="primary">SRC</name>
</gene>
<accession>P00523</accession>
<accession>Q90992</accession>
<accession>Q90993</accession>
<accession>Q91343</accession>
<accession>Q91345</accession>
<accession>Q92013</accession>
<accession>Q98915</accession>
<feature type="initiator methionine" description="Removed" evidence="1">
    <location>
        <position position="1"/>
    </location>
</feature>
<feature type="chain" id="PRO_0000088144" description="Proto-oncogene tyrosine-protein kinase Src">
    <location>
        <begin position="2"/>
        <end position="533"/>
    </location>
</feature>
<feature type="domain" description="SH3" evidence="6">
    <location>
        <begin position="81"/>
        <end position="142"/>
    </location>
</feature>
<feature type="domain" description="SH2" evidence="5">
    <location>
        <begin position="148"/>
        <end position="245"/>
    </location>
</feature>
<feature type="domain" description="Protein kinase" evidence="4">
    <location>
        <begin position="267"/>
        <end position="520"/>
    </location>
</feature>
<feature type="region of interest" description="Disordered" evidence="8">
    <location>
        <begin position="1"/>
        <end position="58"/>
    </location>
</feature>
<feature type="compositionally biased region" description="Basic and acidic residues" evidence="8">
    <location>
        <begin position="7"/>
        <end position="25"/>
    </location>
</feature>
<feature type="active site" description="Proton acceptor" evidence="4 7">
    <location>
        <position position="386"/>
    </location>
</feature>
<feature type="binding site" evidence="4">
    <location>
        <begin position="273"/>
        <end position="281"/>
    </location>
    <ligand>
        <name>ATP</name>
        <dbReference type="ChEBI" id="CHEBI:30616"/>
    </ligand>
</feature>
<feature type="binding site">
    <location>
        <position position="295"/>
    </location>
    <ligand>
        <name>ATP</name>
        <dbReference type="ChEBI" id="CHEBI:30616"/>
    </ligand>
</feature>
<feature type="modified residue" description="Phosphoserine; by PKC" evidence="16">
    <location>
        <position position="12"/>
    </location>
</feature>
<feature type="modified residue" description="Phosphothreonine" evidence="15">
    <location>
        <position position="34"/>
    </location>
</feature>
<feature type="modified residue" description="Phosphothreonine" evidence="15">
    <location>
        <position position="46"/>
    </location>
</feature>
<feature type="modified residue" description="Phosphoserine" evidence="15">
    <location>
        <position position="72"/>
    </location>
</feature>
<feature type="modified residue" description="Phosphotyrosine; by autocatalysis" evidence="17 20">
    <location>
        <position position="416"/>
    </location>
</feature>
<feature type="modified residue" description="Phosphotyrosine; by autocatalysis" evidence="20">
    <location>
        <position position="436"/>
    </location>
</feature>
<feature type="modified residue" description="S-nitrosocysteine" evidence="13">
    <location>
        <position position="498"/>
    </location>
</feature>
<feature type="modified residue" description="Phosphotyrosine; by CSK" evidence="14">
    <location>
        <position position="527"/>
    </location>
</feature>
<feature type="lipid moiety-binding region" description="N-myristoyl glycine" evidence="1">
    <location>
        <position position="2"/>
    </location>
</feature>
<feature type="splice variant" id="VSP_011844" description="In isoform 2." evidence="22">
    <original>AYCLSVSDFDN</original>
    <variation>DPCIPLPSCLC</variation>
    <location>
        <begin position="183"/>
        <end position="193"/>
    </location>
</feature>
<feature type="splice variant" id="VSP_011845" description="In isoform 2." evidence="22">
    <location>
        <begin position="194"/>
        <end position="533"/>
    </location>
</feature>
<feature type="mutagenesis site" description="Significant reduction in S-nitrosylation." evidence="13">
    <original>C</original>
    <variation>A</variation>
    <location>
        <position position="498"/>
    </location>
</feature>
<feature type="mutagenesis site" description="Constitutively active." evidence="12">
    <original>Y</original>
    <variation>F</variation>
    <location>
        <position position="527"/>
    </location>
</feature>
<feature type="sequence conflict" description="In Ref. 1." evidence="23" ref="1">
    <original>T</original>
    <variation>N</variation>
    <location>
        <position position="301"/>
    </location>
</feature>
<feature type="sequence conflict" description="In Ref. 1." evidence="23" ref="1">
    <original>K</original>
    <variation>R</variation>
    <location>
        <position position="501"/>
    </location>
</feature>
<feature type="strand" evidence="35">
    <location>
        <begin position="85"/>
        <end position="90"/>
    </location>
</feature>
<feature type="strand" evidence="35">
    <location>
        <begin position="96"/>
        <end position="99"/>
    </location>
</feature>
<feature type="strand" evidence="37">
    <location>
        <begin position="102"/>
        <end position="104"/>
    </location>
</feature>
<feature type="strand" evidence="35">
    <location>
        <begin position="107"/>
        <end position="110"/>
    </location>
</feature>
<feature type="helix" evidence="33">
    <location>
        <begin position="113"/>
        <end position="115"/>
    </location>
</feature>
<feature type="strand" evidence="35">
    <location>
        <begin position="116"/>
        <end position="123"/>
    </location>
</feature>
<feature type="turn" evidence="35">
    <location>
        <begin position="124"/>
        <end position="126"/>
    </location>
</feature>
<feature type="strand" evidence="35">
    <location>
        <begin position="129"/>
        <end position="133"/>
    </location>
</feature>
<feature type="helix" evidence="35">
    <location>
        <begin position="134"/>
        <end position="136"/>
    </location>
</feature>
<feature type="strand" evidence="35">
    <location>
        <begin position="137"/>
        <end position="139"/>
    </location>
</feature>
<feature type="helix" evidence="29">
    <location>
        <begin position="143"/>
        <end position="145"/>
    </location>
</feature>
<feature type="strand" evidence="27">
    <location>
        <begin position="149"/>
        <end position="152"/>
    </location>
</feature>
<feature type="helix" evidence="28">
    <location>
        <begin position="155"/>
        <end position="162"/>
    </location>
</feature>
<feature type="strand" evidence="29">
    <location>
        <begin position="165"/>
        <end position="167"/>
    </location>
</feature>
<feature type="strand" evidence="28">
    <location>
        <begin position="172"/>
        <end position="176"/>
    </location>
</feature>
<feature type="strand" evidence="28">
    <location>
        <begin position="178"/>
        <end position="180"/>
    </location>
</feature>
<feature type="strand" evidence="28">
    <location>
        <begin position="184"/>
        <end position="192"/>
    </location>
</feature>
<feature type="turn" evidence="28">
    <location>
        <begin position="193"/>
        <end position="195"/>
    </location>
</feature>
<feature type="strand" evidence="28">
    <location>
        <begin position="196"/>
        <end position="206"/>
    </location>
</feature>
<feature type="strand" evidence="28">
    <location>
        <begin position="212"/>
        <end position="215"/>
    </location>
</feature>
<feature type="strand" evidence="28">
    <location>
        <begin position="218"/>
        <end position="222"/>
    </location>
</feature>
<feature type="helix" evidence="28">
    <location>
        <begin position="223"/>
        <end position="232"/>
    </location>
</feature>
<feature type="strand" evidence="28">
    <location>
        <begin position="237"/>
        <end position="239"/>
    </location>
</feature>
<feature type="strand" evidence="29">
    <location>
        <begin position="253"/>
        <end position="258"/>
    </location>
</feature>
<feature type="strand" evidence="31">
    <location>
        <begin position="259"/>
        <end position="261"/>
    </location>
</feature>
<feature type="helix" evidence="36">
    <location>
        <begin position="264"/>
        <end position="266"/>
    </location>
</feature>
<feature type="strand" evidence="36">
    <location>
        <begin position="267"/>
        <end position="275"/>
    </location>
</feature>
<feature type="strand" evidence="30">
    <location>
        <begin position="277"/>
        <end position="279"/>
    </location>
</feature>
<feature type="strand" evidence="36">
    <location>
        <begin position="280"/>
        <end position="286"/>
    </location>
</feature>
<feature type="turn" evidence="36">
    <location>
        <begin position="287"/>
        <end position="289"/>
    </location>
</feature>
<feature type="strand" evidence="36">
    <location>
        <begin position="290"/>
        <end position="296"/>
    </location>
</feature>
<feature type="turn" evidence="36">
    <location>
        <begin position="299"/>
        <end position="301"/>
    </location>
</feature>
<feature type="helix" evidence="36">
    <location>
        <begin position="304"/>
        <end position="316"/>
    </location>
</feature>
<feature type="strand" evidence="36">
    <location>
        <begin position="325"/>
        <end position="329"/>
    </location>
</feature>
<feature type="strand" evidence="36">
    <location>
        <begin position="331"/>
        <end position="333"/>
    </location>
</feature>
<feature type="strand" evidence="36">
    <location>
        <begin position="335"/>
        <end position="339"/>
    </location>
</feature>
<feature type="helix" evidence="36">
    <location>
        <begin position="346"/>
        <end position="351"/>
    </location>
</feature>
<feature type="helix" evidence="36">
    <location>
        <begin position="353"/>
        <end position="356"/>
    </location>
</feature>
<feature type="helix" evidence="36">
    <location>
        <begin position="360"/>
        <end position="379"/>
    </location>
</feature>
<feature type="helix" evidence="36">
    <location>
        <begin position="389"/>
        <end position="391"/>
    </location>
</feature>
<feature type="strand" evidence="36">
    <location>
        <begin position="392"/>
        <end position="394"/>
    </location>
</feature>
<feature type="helix" evidence="36">
    <location>
        <begin position="396"/>
        <end position="398"/>
    </location>
</feature>
<feature type="strand" evidence="36">
    <location>
        <begin position="400"/>
        <end position="402"/>
    </location>
</feature>
<feature type="helix" evidence="30">
    <location>
        <begin position="405"/>
        <end position="407"/>
    </location>
</feature>
<feature type="helix" evidence="32">
    <location>
        <begin position="408"/>
        <end position="410"/>
    </location>
</feature>
<feature type="helix" evidence="32">
    <location>
        <begin position="414"/>
        <end position="417"/>
    </location>
</feature>
<feature type="strand" evidence="34">
    <location>
        <begin position="421"/>
        <end position="424"/>
    </location>
</feature>
<feature type="helix" evidence="36">
    <location>
        <begin position="426"/>
        <end position="428"/>
    </location>
</feature>
<feature type="helix" evidence="36">
    <location>
        <begin position="431"/>
        <end position="436"/>
    </location>
</feature>
<feature type="helix" evidence="36">
    <location>
        <begin position="441"/>
        <end position="456"/>
    </location>
</feature>
<feature type="turn" evidence="32">
    <location>
        <begin position="457"/>
        <end position="459"/>
    </location>
</feature>
<feature type="helix" evidence="36">
    <location>
        <begin position="468"/>
        <end position="476"/>
    </location>
</feature>
<feature type="helix" evidence="36">
    <location>
        <begin position="489"/>
        <end position="498"/>
    </location>
</feature>
<feature type="helix" evidence="36">
    <location>
        <begin position="503"/>
        <end position="505"/>
    </location>
</feature>
<feature type="helix" evidence="36">
    <location>
        <begin position="509"/>
        <end position="517"/>
    </location>
</feature>
<feature type="helix" evidence="36">
    <location>
        <begin position="519"/>
        <end position="522"/>
    </location>
</feature>
<keyword id="KW-0002">3D-structure</keyword>
<keyword id="KW-0025">Alternative splicing</keyword>
<keyword id="KW-0067">ATP-binding</keyword>
<keyword id="KW-0130">Cell adhesion</keyword>
<keyword id="KW-0131">Cell cycle</keyword>
<keyword id="KW-0965">Cell junction</keyword>
<keyword id="KW-1003">Cell membrane</keyword>
<keyword id="KW-0963">Cytoplasm</keyword>
<keyword id="KW-0206">Cytoskeleton</keyword>
<keyword id="KW-0967">Endosome</keyword>
<keyword id="KW-0391">Immunity</keyword>
<keyword id="KW-0418">Kinase</keyword>
<keyword id="KW-0449">Lipoprotein</keyword>
<keyword id="KW-0472">Membrane</keyword>
<keyword id="KW-0496">Mitochondrion</keyword>
<keyword id="KW-0999">Mitochondrion inner membrane</keyword>
<keyword id="KW-0519">Myristate</keyword>
<keyword id="KW-0547">Nucleotide-binding</keyword>
<keyword id="KW-0539">Nucleus</keyword>
<keyword id="KW-0597">Phosphoprotein</keyword>
<keyword id="KW-0656">Proto-oncogene</keyword>
<keyword id="KW-1185">Reference proteome</keyword>
<keyword id="KW-0702">S-nitrosylation</keyword>
<keyword id="KW-0727">SH2 domain</keyword>
<keyword id="KW-0728">SH3 domain</keyword>
<keyword id="KW-0808">Transferase</keyword>
<keyword id="KW-0829">Tyrosine-protein kinase</keyword>
<sequence length="533" mass="60010">MGSSKSKPKDPSQRRRSLEPPDSTHHGGFPASQTPNKTAAPDTHRTPSRSFGTVATEPKLFGGFNTSDTVTSPQRAGALAGGVTTFVALYDYESRTETDLSFKKGERLQIVNNTEGDWWLAHSLTTGQTGYIPSNYVAPSDSIQAEEWYFGKITRRESERLLLNPENPRGTFLVRESETTKGAYCLSVSDFDNAKGLNVKHYKIRKLDSGGFYITSRTQFSSLQQLVAYYSKHADGLCHRLTNVCPTSKPQTQGLAKDAWEIPRESLRLEVKLGQGCFGEVWMGTWNGTTRVAIKTLKPGTMSPEAFLQEAQVMKKLRHEKLVQLYAVVSEEPIYIVTEYMSKGSLLDFLKGEMGKYLRLPQLVDMAAQIASGMAYVERMNYVHRDLRAANILVGENLVCKVADFGLARLIEDNEYTARQGAKFPIKWTAPEAALYGRFTIKSDVWSFGILLTELTTKGRVPYPGMVNREVLDQVERGYRMPCPPECPESLHDLMCQCWRKDPEERPTFEYLQAFLEDYFTSTEPQYQPGENL</sequence>
<protein>
    <recommendedName>
        <fullName>Proto-oncogene tyrosine-protein kinase Src</fullName>
        <ecNumber>2.7.10.2</ecNumber>
    </recommendedName>
    <alternativeName>
        <fullName>Proto-oncogene c-Src</fullName>
    </alternativeName>
    <alternativeName>
        <fullName>pp60c-src</fullName>
        <shortName>p60-Src</shortName>
    </alternativeName>
</protein>